<reference key="1">
    <citation type="journal article" date="2005" name="J. Bacteriol.">
        <title>Whole-genome sequencing of Staphylococcus haemolyticus uncovers the extreme plasticity of its genome and the evolution of human-colonizing staphylococcal species.</title>
        <authorList>
            <person name="Takeuchi F."/>
            <person name="Watanabe S."/>
            <person name="Baba T."/>
            <person name="Yuzawa H."/>
            <person name="Ito T."/>
            <person name="Morimoto Y."/>
            <person name="Kuroda M."/>
            <person name="Cui L."/>
            <person name="Takahashi M."/>
            <person name="Ankai A."/>
            <person name="Baba S."/>
            <person name="Fukui S."/>
            <person name="Lee J.C."/>
            <person name="Hiramatsu K."/>
        </authorList>
    </citation>
    <scope>NUCLEOTIDE SEQUENCE [LARGE SCALE GENOMIC DNA]</scope>
    <source>
        <strain>JCSC1435</strain>
    </source>
</reference>
<dbReference type="EC" id="2.5.1.3" evidence="1"/>
<dbReference type="EMBL" id="AP006716">
    <property type="protein sequence ID" value="BAE04252.1"/>
    <property type="molecule type" value="Genomic_DNA"/>
</dbReference>
<dbReference type="RefSeq" id="WP_011275254.1">
    <property type="nucleotide sequence ID" value="NC_007168.1"/>
</dbReference>
<dbReference type="SMR" id="Q4L7X3"/>
<dbReference type="GeneID" id="93780331"/>
<dbReference type="KEGG" id="sha:SH0943"/>
<dbReference type="eggNOG" id="COG0352">
    <property type="taxonomic scope" value="Bacteria"/>
</dbReference>
<dbReference type="HOGENOM" id="CLU_018272_3_2_9"/>
<dbReference type="OrthoDB" id="9812206at2"/>
<dbReference type="UniPathway" id="UPA00060">
    <property type="reaction ID" value="UER00141"/>
</dbReference>
<dbReference type="Proteomes" id="UP000000543">
    <property type="component" value="Chromosome"/>
</dbReference>
<dbReference type="GO" id="GO:0005737">
    <property type="term" value="C:cytoplasm"/>
    <property type="evidence" value="ECO:0007669"/>
    <property type="project" value="TreeGrafter"/>
</dbReference>
<dbReference type="GO" id="GO:0000287">
    <property type="term" value="F:magnesium ion binding"/>
    <property type="evidence" value="ECO:0007669"/>
    <property type="project" value="UniProtKB-UniRule"/>
</dbReference>
<dbReference type="GO" id="GO:0004789">
    <property type="term" value="F:thiamine-phosphate diphosphorylase activity"/>
    <property type="evidence" value="ECO:0007669"/>
    <property type="project" value="UniProtKB-UniRule"/>
</dbReference>
<dbReference type="GO" id="GO:0009228">
    <property type="term" value="P:thiamine biosynthetic process"/>
    <property type="evidence" value="ECO:0007669"/>
    <property type="project" value="UniProtKB-KW"/>
</dbReference>
<dbReference type="GO" id="GO:0009229">
    <property type="term" value="P:thiamine diphosphate biosynthetic process"/>
    <property type="evidence" value="ECO:0007669"/>
    <property type="project" value="UniProtKB-UniRule"/>
</dbReference>
<dbReference type="CDD" id="cd00564">
    <property type="entry name" value="TMP_TenI"/>
    <property type="match status" value="1"/>
</dbReference>
<dbReference type="FunFam" id="3.20.20.70:FF:000096">
    <property type="entry name" value="Thiamine-phosphate synthase"/>
    <property type="match status" value="1"/>
</dbReference>
<dbReference type="Gene3D" id="3.20.20.70">
    <property type="entry name" value="Aldolase class I"/>
    <property type="match status" value="1"/>
</dbReference>
<dbReference type="HAMAP" id="MF_00097">
    <property type="entry name" value="TMP_synthase"/>
    <property type="match status" value="1"/>
</dbReference>
<dbReference type="InterPro" id="IPR013785">
    <property type="entry name" value="Aldolase_TIM"/>
</dbReference>
<dbReference type="InterPro" id="IPR036206">
    <property type="entry name" value="ThiamineP_synth_sf"/>
</dbReference>
<dbReference type="InterPro" id="IPR022998">
    <property type="entry name" value="ThiamineP_synth_TenI"/>
</dbReference>
<dbReference type="InterPro" id="IPR034291">
    <property type="entry name" value="TMP_synthase"/>
</dbReference>
<dbReference type="NCBIfam" id="TIGR00693">
    <property type="entry name" value="thiE"/>
    <property type="match status" value="1"/>
</dbReference>
<dbReference type="PANTHER" id="PTHR20857">
    <property type="entry name" value="THIAMINE-PHOSPHATE PYROPHOSPHORYLASE"/>
    <property type="match status" value="1"/>
</dbReference>
<dbReference type="PANTHER" id="PTHR20857:SF15">
    <property type="entry name" value="THIAMINE-PHOSPHATE SYNTHASE"/>
    <property type="match status" value="1"/>
</dbReference>
<dbReference type="Pfam" id="PF02581">
    <property type="entry name" value="TMP-TENI"/>
    <property type="match status" value="1"/>
</dbReference>
<dbReference type="SUPFAM" id="SSF51391">
    <property type="entry name" value="Thiamin phosphate synthase"/>
    <property type="match status" value="1"/>
</dbReference>
<sequence length="212" mass="23255">MFNSSSLNVYFICGTQDVPEGKDIREILKQALEAGITLFQFREKGPTSLDGVEKEHLAIDLLKLCHDYQVPFIVNDDVDLAEKINADGIHVGQDDENVKSFAERFKDKIIGLSIGNEKEYYHSDLEHVDYIGVGPMFATISKNDANAPVGPSMIATLKNINPSLPMVAIGGITEDNIEPIAQNGADGVSVISAIARSHNIDKTVTKMKSYFK</sequence>
<accession>Q4L7X3</accession>
<proteinExistence type="inferred from homology"/>
<name>THIE_STAHJ</name>
<protein>
    <recommendedName>
        <fullName evidence="1">Thiamine-phosphate synthase</fullName>
        <shortName evidence="1">TP synthase</shortName>
        <shortName evidence="1">TPS</shortName>
        <ecNumber evidence="1">2.5.1.3</ecNumber>
    </recommendedName>
    <alternativeName>
        <fullName evidence="1">Thiamine-phosphate pyrophosphorylase</fullName>
        <shortName evidence="1">TMP pyrophosphorylase</shortName>
        <shortName evidence="1">TMP-PPase</shortName>
    </alternativeName>
</protein>
<comment type="function">
    <text evidence="1">Condenses 4-methyl-5-(beta-hydroxyethyl)thiazole monophosphate (THZ-P) and 2-methyl-4-amino-5-hydroxymethyl pyrimidine pyrophosphate (HMP-PP) to form thiamine monophosphate (TMP).</text>
</comment>
<comment type="catalytic activity">
    <reaction evidence="1">
        <text>2-[(2R,5Z)-2-carboxy-4-methylthiazol-5(2H)-ylidene]ethyl phosphate + 4-amino-2-methyl-5-(diphosphooxymethyl)pyrimidine + 2 H(+) = thiamine phosphate + CO2 + diphosphate</text>
        <dbReference type="Rhea" id="RHEA:47844"/>
        <dbReference type="ChEBI" id="CHEBI:15378"/>
        <dbReference type="ChEBI" id="CHEBI:16526"/>
        <dbReference type="ChEBI" id="CHEBI:33019"/>
        <dbReference type="ChEBI" id="CHEBI:37575"/>
        <dbReference type="ChEBI" id="CHEBI:57841"/>
        <dbReference type="ChEBI" id="CHEBI:62899"/>
        <dbReference type="EC" id="2.5.1.3"/>
    </reaction>
</comment>
<comment type="catalytic activity">
    <reaction evidence="1">
        <text>2-(2-carboxy-4-methylthiazol-5-yl)ethyl phosphate + 4-amino-2-methyl-5-(diphosphooxymethyl)pyrimidine + 2 H(+) = thiamine phosphate + CO2 + diphosphate</text>
        <dbReference type="Rhea" id="RHEA:47848"/>
        <dbReference type="ChEBI" id="CHEBI:15378"/>
        <dbReference type="ChEBI" id="CHEBI:16526"/>
        <dbReference type="ChEBI" id="CHEBI:33019"/>
        <dbReference type="ChEBI" id="CHEBI:37575"/>
        <dbReference type="ChEBI" id="CHEBI:57841"/>
        <dbReference type="ChEBI" id="CHEBI:62890"/>
        <dbReference type="EC" id="2.5.1.3"/>
    </reaction>
</comment>
<comment type="catalytic activity">
    <reaction evidence="1">
        <text>4-methyl-5-(2-phosphooxyethyl)-thiazole + 4-amino-2-methyl-5-(diphosphooxymethyl)pyrimidine + H(+) = thiamine phosphate + diphosphate</text>
        <dbReference type="Rhea" id="RHEA:22328"/>
        <dbReference type="ChEBI" id="CHEBI:15378"/>
        <dbReference type="ChEBI" id="CHEBI:33019"/>
        <dbReference type="ChEBI" id="CHEBI:37575"/>
        <dbReference type="ChEBI" id="CHEBI:57841"/>
        <dbReference type="ChEBI" id="CHEBI:58296"/>
        <dbReference type="EC" id="2.5.1.3"/>
    </reaction>
</comment>
<comment type="cofactor">
    <cofactor evidence="1">
        <name>Mg(2+)</name>
        <dbReference type="ChEBI" id="CHEBI:18420"/>
    </cofactor>
    <text evidence="1">Binds 1 Mg(2+) ion per subunit.</text>
</comment>
<comment type="pathway">
    <text evidence="1">Cofactor biosynthesis; thiamine diphosphate biosynthesis; thiamine phosphate from 4-amino-2-methyl-5-diphosphomethylpyrimidine and 4-methyl-5-(2-phosphoethyl)-thiazole: step 1/1.</text>
</comment>
<comment type="similarity">
    <text evidence="1">Belongs to the thiamine-phosphate synthase family.</text>
</comment>
<gene>
    <name evidence="1" type="primary">thiE</name>
    <name type="ordered locus">SH0943</name>
</gene>
<evidence type="ECO:0000255" key="1">
    <source>
        <dbReference type="HAMAP-Rule" id="MF_00097"/>
    </source>
</evidence>
<keyword id="KW-0460">Magnesium</keyword>
<keyword id="KW-0479">Metal-binding</keyword>
<keyword id="KW-0784">Thiamine biosynthesis</keyword>
<keyword id="KW-0808">Transferase</keyword>
<organism>
    <name type="scientific">Staphylococcus haemolyticus (strain JCSC1435)</name>
    <dbReference type="NCBI Taxonomy" id="279808"/>
    <lineage>
        <taxon>Bacteria</taxon>
        <taxon>Bacillati</taxon>
        <taxon>Bacillota</taxon>
        <taxon>Bacilli</taxon>
        <taxon>Bacillales</taxon>
        <taxon>Staphylococcaceae</taxon>
        <taxon>Staphylococcus</taxon>
    </lineage>
</organism>
<feature type="chain" id="PRO_1000008178" description="Thiamine-phosphate synthase">
    <location>
        <begin position="1"/>
        <end position="212"/>
    </location>
</feature>
<feature type="binding site" evidence="1">
    <location>
        <begin position="40"/>
        <end position="44"/>
    </location>
    <ligand>
        <name>4-amino-2-methyl-5-(diphosphooxymethyl)pyrimidine</name>
        <dbReference type="ChEBI" id="CHEBI:57841"/>
    </ligand>
</feature>
<feature type="binding site" evidence="1">
    <location>
        <position position="75"/>
    </location>
    <ligand>
        <name>4-amino-2-methyl-5-(diphosphooxymethyl)pyrimidine</name>
        <dbReference type="ChEBI" id="CHEBI:57841"/>
    </ligand>
</feature>
<feature type="binding site" evidence="1">
    <location>
        <position position="76"/>
    </location>
    <ligand>
        <name>Mg(2+)</name>
        <dbReference type="ChEBI" id="CHEBI:18420"/>
    </ligand>
</feature>
<feature type="binding site" evidence="1">
    <location>
        <position position="95"/>
    </location>
    <ligand>
        <name>Mg(2+)</name>
        <dbReference type="ChEBI" id="CHEBI:18420"/>
    </ligand>
</feature>
<feature type="binding site" evidence="1">
    <location>
        <position position="113"/>
    </location>
    <ligand>
        <name>4-amino-2-methyl-5-(diphosphooxymethyl)pyrimidine</name>
        <dbReference type="ChEBI" id="CHEBI:57841"/>
    </ligand>
</feature>
<feature type="binding site" evidence="1">
    <location>
        <begin position="139"/>
        <end position="141"/>
    </location>
    <ligand>
        <name>2-[(2R,5Z)-2-carboxy-4-methylthiazol-5(2H)-ylidene]ethyl phosphate</name>
        <dbReference type="ChEBI" id="CHEBI:62899"/>
    </ligand>
</feature>
<feature type="binding site" evidence="1">
    <location>
        <position position="142"/>
    </location>
    <ligand>
        <name>4-amino-2-methyl-5-(diphosphooxymethyl)pyrimidine</name>
        <dbReference type="ChEBI" id="CHEBI:57841"/>
    </ligand>
</feature>
<feature type="binding site" evidence="1">
    <location>
        <position position="171"/>
    </location>
    <ligand>
        <name>2-[(2R,5Z)-2-carboxy-4-methylthiazol-5(2H)-ylidene]ethyl phosphate</name>
        <dbReference type="ChEBI" id="CHEBI:62899"/>
    </ligand>
</feature>
<feature type="binding site" evidence="1">
    <location>
        <begin position="191"/>
        <end position="192"/>
    </location>
    <ligand>
        <name>2-[(2R,5Z)-2-carboxy-4-methylthiazol-5(2H)-ylidene]ethyl phosphate</name>
        <dbReference type="ChEBI" id="CHEBI:62899"/>
    </ligand>
</feature>